<name>CHED_XANE5</name>
<evidence type="ECO:0000255" key="1">
    <source>
        <dbReference type="HAMAP-Rule" id="MF_01440"/>
    </source>
</evidence>
<organism>
    <name type="scientific">Xanthomonas euvesicatoria pv. vesicatoria (strain 85-10)</name>
    <name type="common">Xanthomonas campestris pv. vesicatoria</name>
    <dbReference type="NCBI Taxonomy" id="316273"/>
    <lineage>
        <taxon>Bacteria</taxon>
        <taxon>Pseudomonadati</taxon>
        <taxon>Pseudomonadota</taxon>
        <taxon>Gammaproteobacteria</taxon>
        <taxon>Lysobacterales</taxon>
        <taxon>Lysobacteraceae</taxon>
        <taxon>Xanthomonas</taxon>
    </lineage>
</organism>
<comment type="function">
    <text evidence="1">Probably deamidates glutamine residues to glutamate on methyl-accepting chemotaxis receptors (MCPs), playing an important role in chemotaxis.</text>
</comment>
<comment type="catalytic activity">
    <reaction evidence="1">
        <text>L-glutaminyl-[protein] + H2O = L-glutamyl-[protein] + NH4(+)</text>
        <dbReference type="Rhea" id="RHEA:16441"/>
        <dbReference type="Rhea" id="RHEA-COMP:10207"/>
        <dbReference type="Rhea" id="RHEA-COMP:10208"/>
        <dbReference type="ChEBI" id="CHEBI:15377"/>
        <dbReference type="ChEBI" id="CHEBI:28938"/>
        <dbReference type="ChEBI" id="CHEBI:29973"/>
        <dbReference type="ChEBI" id="CHEBI:30011"/>
        <dbReference type="EC" id="3.5.1.44"/>
    </reaction>
</comment>
<comment type="similarity">
    <text evidence="1">Belongs to the CheD family.</text>
</comment>
<feature type="chain" id="PRO_0000251082" description="Probable chemoreceptor glutamine deamidase CheD">
    <location>
        <begin position="1"/>
        <end position="198"/>
    </location>
</feature>
<proteinExistence type="inferred from homology"/>
<keyword id="KW-0145">Chemotaxis</keyword>
<keyword id="KW-0378">Hydrolase</keyword>
<protein>
    <recommendedName>
        <fullName evidence="1">Probable chemoreceptor glutamine deamidase CheD</fullName>
        <ecNumber evidence="1">3.5.1.44</ecNumber>
    </recommendedName>
</protein>
<sequence>MSTAVQVDDVMRYRDSRFQTIAAKLLPTQYLVVDDDTALTTTLGSCVAACLRDPVLKIGGMNHFLLPKGQVGDGAPTRYGSYAMELLINDMLKRGAHRKRIEAKVFGGANVLKGFTSNPVGTRNAEFVRQYLQAEHIPIIAEDLCGIHPRKVWFFATTGRVVVQRLPHAHEAEVAATESAVRARLSKAPVTGGVELFE</sequence>
<gene>
    <name evidence="1" type="primary">cheD</name>
    <name type="ordered locus">XCV1931</name>
</gene>
<dbReference type="EC" id="3.5.1.44" evidence="1"/>
<dbReference type="EMBL" id="AM039952">
    <property type="protein sequence ID" value="CAJ23608.1"/>
    <property type="molecule type" value="Genomic_DNA"/>
</dbReference>
<dbReference type="RefSeq" id="WP_011347223.1">
    <property type="nucleotide sequence ID" value="NZ_CP017190.1"/>
</dbReference>
<dbReference type="SMR" id="Q3BUA1"/>
<dbReference type="STRING" id="456327.BJD11_12770"/>
<dbReference type="KEGG" id="xcv:XCV1931"/>
<dbReference type="eggNOG" id="COG1871">
    <property type="taxonomic scope" value="Bacteria"/>
</dbReference>
<dbReference type="HOGENOM" id="CLU_087854_0_0_6"/>
<dbReference type="Proteomes" id="UP000007069">
    <property type="component" value="Chromosome"/>
</dbReference>
<dbReference type="GO" id="GO:0050568">
    <property type="term" value="F:protein-glutamine glutaminase activity"/>
    <property type="evidence" value="ECO:0007669"/>
    <property type="project" value="UniProtKB-UniRule"/>
</dbReference>
<dbReference type="GO" id="GO:0006935">
    <property type="term" value="P:chemotaxis"/>
    <property type="evidence" value="ECO:0007669"/>
    <property type="project" value="UniProtKB-UniRule"/>
</dbReference>
<dbReference type="CDD" id="cd16352">
    <property type="entry name" value="CheD"/>
    <property type="match status" value="1"/>
</dbReference>
<dbReference type="Gene3D" id="3.30.1330.200">
    <property type="match status" value="1"/>
</dbReference>
<dbReference type="HAMAP" id="MF_01440">
    <property type="entry name" value="CheD"/>
    <property type="match status" value="1"/>
</dbReference>
<dbReference type="InterPro" id="IPR038592">
    <property type="entry name" value="CheD-like_sf"/>
</dbReference>
<dbReference type="InterPro" id="IPR005659">
    <property type="entry name" value="Chemorcpt_Glu_NH3ase_CheD"/>
</dbReference>
<dbReference type="InterPro" id="IPR011324">
    <property type="entry name" value="Cytotoxic_necrot_fac-like_cat"/>
</dbReference>
<dbReference type="NCBIfam" id="NF010013">
    <property type="entry name" value="PRK13487.1"/>
    <property type="match status" value="1"/>
</dbReference>
<dbReference type="PANTHER" id="PTHR35147">
    <property type="entry name" value="CHEMORECEPTOR GLUTAMINE DEAMIDASE CHED-RELATED"/>
    <property type="match status" value="1"/>
</dbReference>
<dbReference type="PANTHER" id="PTHR35147:SF2">
    <property type="entry name" value="CHEMORECEPTOR GLUTAMINE DEAMIDASE CHED-RELATED"/>
    <property type="match status" value="1"/>
</dbReference>
<dbReference type="Pfam" id="PF03975">
    <property type="entry name" value="CheD"/>
    <property type="match status" value="1"/>
</dbReference>
<dbReference type="SUPFAM" id="SSF64438">
    <property type="entry name" value="CNF1/YfiH-like putative cysteine hydrolases"/>
    <property type="match status" value="1"/>
</dbReference>
<reference key="1">
    <citation type="journal article" date="2005" name="J. Bacteriol.">
        <title>Insights into genome plasticity and pathogenicity of the plant pathogenic Bacterium Xanthomonas campestris pv. vesicatoria revealed by the complete genome sequence.</title>
        <authorList>
            <person name="Thieme F."/>
            <person name="Koebnik R."/>
            <person name="Bekel T."/>
            <person name="Berger C."/>
            <person name="Boch J."/>
            <person name="Buettner D."/>
            <person name="Caldana C."/>
            <person name="Gaigalat L."/>
            <person name="Goesmann A."/>
            <person name="Kay S."/>
            <person name="Kirchner O."/>
            <person name="Lanz C."/>
            <person name="Linke B."/>
            <person name="McHardy A.C."/>
            <person name="Meyer F."/>
            <person name="Mittenhuber G."/>
            <person name="Nies D.H."/>
            <person name="Niesbach-Kloesgen U."/>
            <person name="Patschkowski T."/>
            <person name="Rueckert C."/>
            <person name="Rupp O."/>
            <person name="Schneiker S."/>
            <person name="Schuster S.C."/>
            <person name="Vorhoelter F.J."/>
            <person name="Weber E."/>
            <person name="Puehler A."/>
            <person name="Bonas U."/>
            <person name="Bartels D."/>
            <person name="Kaiser O."/>
        </authorList>
    </citation>
    <scope>NUCLEOTIDE SEQUENCE [LARGE SCALE GENOMIC DNA]</scope>
    <source>
        <strain>85-10</strain>
    </source>
</reference>
<accession>Q3BUA1</accession>